<proteinExistence type="inferred from homology"/>
<reference key="1">
    <citation type="submission" date="2008-10" db="EMBL/GenBank/DDBJ databases">
        <title>Genome sequence of Bacillus cereus B4264.</title>
        <authorList>
            <person name="Dodson R.J."/>
            <person name="Durkin A.S."/>
            <person name="Rosovitz M.J."/>
            <person name="Rasko D.A."/>
            <person name="Hoffmaster A."/>
            <person name="Ravel J."/>
            <person name="Sutton G."/>
        </authorList>
    </citation>
    <scope>NUCLEOTIDE SEQUENCE [LARGE SCALE GENOMIC DNA]</scope>
    <source>
        <strain>B4264</strain>
    </source>
</reference>
<comment type="function">
    <text evidence="1">Catalyzes the reversible adenylation of nicotinate mononucleotide (NaMN) to nicotinic acid adenine dinucleotide (NaAD).</text>
</comment>
<comment type="catalytic activity">
    <reaction evidence="1">
        <text>nicotinate beta-D-ribonucleotide + ATP + H(+) = deamido-NAD(+) + diphosphate</text>
        <dbReference type="Rhea" id="RHEA:22860"/>
        <dbReference type="ChEBI" id="CHEBI:15378"/>
        <dbReference type="ChEBI" id="CHEBI:30616"/>
        <dbReference type="ChEBI" id="CHEBI:33019"/>
        <dbReference type="ChEBI" id="CHEBI:57502"/>
        <dbReference type="ChEBI" id="CHEBI:58437"/>
        <dbReference type="EC" id="2.7.7.18"/>
    </reaction>
</comment>
<comment type="pathway">
    <text evidence="1">Cofactor biosynthesis; NAD(+) biosynthesis; deamido-NAD(+) from nicotinate D-ribonucleotide: step 1/1.</text>
</comment>
<comment type="similarity">
    <text evidence="1">Belongs to the NadD family.</text>
</comment>
<keyword id="KW-0067">ATP-binding</keyword>
<keyword id="KW-0520">NAD</keyword>
<keyword id="KW-0547">Nucleotide-binding</keyword>
<keyword id="KW-0548">Nucleotidyltransferase</keyword>
<keyword id="KW-0662">Pyridine nucleotide biosynthesis</keyword>
<keyword id="KW-0808">Transferase</keyword>
<organism>
    <name type="scientific">Bacillus cereus (strain B4264)</name>
    <dbReference type="NCBI Taxonomy" id="405532"/>
    <lineage>
        <taxon>Bacteria</taxon>
        <taxon>Bacillati</taxon>
        <taxon>Bacillota</taxon>
        <taxon>Bacilli</taxon>
        <taxon>Bacillales</taxon>
        <taxon>Bacillaceae</taxon>
        <taxon>Bacillus</taxon>
        <taxon>Bacillus cereus group</taxon>
    </lineage>
</organism>
<accession>B7HCV9</accession>
<feature type="chain" id="PRO_1000192228" description="Probable nicotinate-nucleotide adenylyltransferase">
    <location>
        <begin position="1"/>
        <end position="189"/>
    </location>
</feature>
<protein>
    <recommendedName>
        <fullName evidence="1">Probable nicotinate-nucleotide adenylyltransferase</fullName>
        <ecNumber evidence="1">2.7.7.18</ecNumber>
    </recommendedName>
    <alternativeName>
        <fullName evidence="1">Deamido-NAD(+) diphosphorylase</fullName>
    </alternativeName>
    <alternativeName>
        <fullName evidence="1">Deamido-NAD(+) pyrophosphorylase</fullName>
    </alternativeName>
    <alternativeName>
        <fullName evidence="1">Nicotinate mononucleotide adenylyltransferase</fullName>
        <shortName evidence="1">NaMN adenylyltransferase</shortName>
    </alternativeName>
</protein>
<gene>
    <name evidence="1" type="primary">nadD</name>
    <name type="ordered locus">BCB4264_A4452</name>
</gene>
<name>NADD_BACC4</name>
<sequence length="189" mass="21948">MRKIGIIGGTFDPPHYGHLLIANEVYHALNLEEVWFLPNQIPPHKQGRNITSVESRLHMLELATEAEEHFSICLEELSRKGPSYTYDTMLQLTKKYPDVQFHFIIGGDMVEYLPKWYNIEALLNLVTFVGVARPGYTLHTPYKITTVEIPEFAVSSSLLRERYKEKKTCKYLLPEKVQVYIERNGLYES</sequence>
<dbReference type="EC" id="2.7.7.18" evidence="1"/>
<dbReference type="EMBL" id="CP001176">
    <property type="protein sequence ID" value="ACK61829.1"/>
    <property type="molecule type" value="Genomic_DNA"/>
</dbReference>
<dbReference type="RefSeq" id="WP_001226048.1">
    <property type="nucleotide sequence ID" value="NC_011725.1"/>
</dbReference>
<dbReference type="SMR" id="B7HCV9"/>
<dbReference type="KEGG" id="bcb:BCB4264_A4452"/>
<dbReference type="HOGENOM" id="CLU_069765_3_1_9"/>
<dbReference type="UniPathway" id="UPA00253">
    <property type="reaction ID" value="UER00332"/>
</dbReference>
<dbReference type="Proteomes" id="UP000007096">
    <property type="component" value="Chromosome"/>
</dbReference>
<dbReference type="GO" id="GO:0005524">
    <property type="term" value="F:ATP binding"/>
    <property type="evidence" value="ECO:0007669"/>
    <property type="project" value="UniProtKB-KW"/>
</dbReference>
<dbReference type="GO" id="GO:0004515">
    <property type="term" value="F:nicotinate-nucleotide adenylyltransferase activity"/>
    <property type="evidence" value="ECO:0007669"/>
    <property type="project" value="UniProtKB-UniRule"/>
</dbReference>
<dbReference type="GO" id="GO:0009435">
    <property type="term" value="P:NAD biosynthetic process"/>
    <property type="evidence" value="ECO:0007669"/>
    <property type="project" value="UniProtKB-UniRule"/>
</dbReference>
<dbReference type="CDD" id="cd02165">
    <property type="entry name" value="NMNAT"/>
    <property type="match status" value="1"/>
</dbReference>
<dbReference type="FunFam" id="3.40.50.620:FF:000079">
    <property type="entry name" value="Probable nicotinate-nucleotide adenylyltransferase"/>
    <property type="match status" value="1"/>
</dbReference>
<dbReference type="Gene3D" id="3.40.50.620">
    <property type="entry name" value="HUPs"/>
    <property type="match status" value="1"/>
</dbReference>
<dbReference type="HAMAP" id="MF_00244">
    <property type="entry name" value="NaMN_adenylyltr"/>
    <property type="match status" value="1"/>
</dbReference>
<dbReference type="InterPro" id="IPR004821">
    <property type="entry name" value="Cyt_trans-like"/>
</dbReference>
<dbReference type="InterPro" id="IPR005248">
    <property type="entry name" value="NadD/NMNAT"/>
</dbReference>
<dbReference type="InterPro" id="IPR014729">
    <property type="entry name" value="Rossmann-like_a/b/a_fold"/>
</dbReference>
<dbReference type="NCBIfam" id="TIGR00125">
    <property type="entry name" value="cyt_tran_rel"/>
    <property type="match status" value="1"/>
</dbReference>
<dbReference type="NCBIfam" id="TIGR00482">
    <property type="entry name" value="nicotinate (nicotinamide) nucleotide adenylyltransferase"/>
    <property type="match status" value="1"/>
</dbReference>
<dbReference type="NCBIfam" id="NF000840">
    <property type="entry name" value="PRK00071.1-3"/>
    <property type="match status" value="1"/>
</dbReference>
<dbReference type="NCBIfam" id="NF000841">
    <property type="entry name" value="PRK00071.1-4"/>
    <property type="match status" value="1"/>
</dbReference>
<dbReference type="PANTHER" id="PTHR39321">
    <property type="entry name" value="NICOTINATE-NUCLEOTIDE ADENYLYLTRANSFERASE-RELATED"/>
    <property type="match status" value="1"/>
</dbReference>
<dbReference type="PANTHER" id="PTHR39321:SF3">
    <property type="entry name" value="PHOSPHOPANTETHEINE ADENYLYLTRANSFERASE"/>
    <property type="match status" value="1"/>
</dbReference>
<dbReference type="Pfam" id="PF01467">
    <property type="entry name" value="CTP_transf_like"/>
    <property type="match status" value="1"/>
</dbReference>
<dbReference type="SUPFAM" id="SSF52374">
    <property type="entry name" value="Nucleotidylyl transferase"/>
    <property type="match status" value="1"/>
</dbReference>
<evidence type="ECO:0000255" key="1">
    <source>
        <dbReference type="HAMAP-Rule" id="MF_00244"/>
    </source>
</evidence>